<name>KATG_SHEHH</name>
<organism>
    <name type="scientific">Shewanella halifaxensis (strain HAW-EB4)</name>
    <dbReference type="NCBI Taxonomy" id="458817"/>
    <lineage>
        <taxon>Bacteria</taxon>
        <taxon>Pseudomonadati</taxon>
        <taxon>Pseudomonadota</taxon>
        <taxon>Gammaproteobacteria</taxon>
        <taxon>Alteromonadales</taxon>
        <taxon>Shewanellaceae</taxon>
        <taxon>Shewanella</taxon>
    </lineage>
</organism>
<comment type="function">
    <text evidence="1">Bifunctional enzyme with both catalase and broad-spectrum peroxidase activity.</text>
</comment>
<comment type="catalytic activity">
    <reaction evidence="1">
        <text>H2O2 + AH2 = A + 2 H2O</text>
        <dbReference type="Rhea" id="RHEA:30275"/>
        <dbReference type="ChEBI" id="CHEBI:13193"/>
        <dbReference type="ChEBI" id="CHEBI:15377"/>
        <dbReference type="ChEBI" id="CHEBI:16240"/>
        <dbReference type="ChEBI" id="CHEBI:17499"/>
        <dbReference type="EC" id="1.11.1.21"/>
    </reaction>
</comment>
<comment type="catalytic activity">
    <reaction evidence="1">
        <text>2 H2O2 = O2 + 2 H2O</text>
        <dbReference type="Rhea" id="RHEA:20309"/>
        <dbReference type="ChEBI" id="CHEBI:15377"/>
        <dbReference type="ChEBI" id="CHEBI:15379"/>
        <dbReference type="ChEBI" id="CHEBI:16240"/>
        <dbReference type="EC" id="1.11.1.21"/>
    </reaction>
</comment>
<comment type="cofactor">
    <cofactor evidence="1">
        <name>heme b</name>
        <dbReference type="ChEBI" id="CHEBI:60344"/>
    </cofactor>
    <text evidence="1">Binds 1 heme b (iron(II)-protoporphyrin IX) group per dimer.</text>
</comment>
<comment type="subunit">
    <text evidence="1">Homodimer or homotetramer.</text>
</comment>
<comment type="PTM">
    <text evidence="1">Formation of the three residue Trp-Tyr-Met cross-link is important for the catalase, but not the peroxidase activity of the enzyme.</text>
</comment>
<comment type="similarity">
    <text evidence="1">Belongs to the peroxidase family. Peroxidase/catalase subfamily.</text>
</comment>
<feature type="chain" id="PRO_0000354919" description="Catalase-peroxidase">
    <location>
        <begin position="1"/>
        <end position="718"/>
    </location>
</feature>
<feature type="active site" description="Proton acceptor" evidence="1">
    <location>
        <position position="93"/>
    </location>
</feature>
<feature type="binding site" description="axial binding residue" evidence="1">
    <location>
        <position position="261"/>
    </location>
    <ligand>
        <name>heme b</name>
        <dbReference type="ChEBI" id="CHEBI:60344"/>
    </ligand>
    <ligandPart>
        <name>Fe</name>
        <dbReference type="ChEBI" id="CHEBI:18248"/>
    </ligandPart>
</feature>
<feature type="site" description="Transition state stabilizer" evidence="1">
    <location>
        <position position="89"/>
    </location>
</feature>
<feature type="cross-link" description="Tryptophyl-tyrosyl-methioninium (Trp-Tyr) (with M-246)" evidence="1">
    <location>
        <begin position="92"/>
        <end position="220"/>
    </location>
</feature>
<feature type="cross-link" description="Tryptophyl-tyrosyl-methioninium (Tyr-Met) (with W-92)" evidence="1">
    <location>
        <begin position="220"/>
        <end position="246"/>
    </location>
</feature>
<proteinExistence type="inferred from homology"/>
<dbReference type="EC" id="1.11.1.21" evidence="1"/>
<dbReference type="EMBL" id="CP000931">
    <property type="protein sequence ID" value="ABZ76453.1"/>
    <property type="molecule type" value="Genomic_DNA"/>
</dbReference>
<dbReference type="RefSeq" id="WP_012276985.1">
    <property type="nucleotide sequence ID" value="NC_010334.1"/>
</dbReference>
<dbReference type="SMR" id="B0TRN5"/>
<dbReference type="STRING" id="458817.Shal_1888"/>
<dbReference type="KEGG" id="shl:Shal_1888"/>
<dbReference type="eggNOG" id="COG0376">
    <property type="taxonomic scope" value="Bacteria"/>
</dbReference>
<dbReference type="HOGENOM" id="CLU_025424_2_0_6"/>
<dbReference type="OrthoDB" id="9759743at2"/>
<dbReference type="Proteomes" id="UP000001317">
    <property type="component" value="Chromosome"/>
</dbReference>
<dbReference type="GO" id="GO:0005829">
    <property type="term" value="C:cytosol"/>
    <property type="evidence" value="ECO:0007669"/>
    <property type="project" value="TreeGrafter"/>
</dbReference>
<dbReference type="GO" id="GO:0004096">
    <property type="term" value="F:catalase activity"/>
    <property type="evidence" value="ECO:0007669"/>
    <property type="project" value="UniProtKB-UniRule"/>
</dbReference>
<dbReference type="GO" id="GO:0020037">
    <property type="term" value="F:heme binding"/>
    <property type="evidence" value="ECO:0007669"/>
    <property type="project" value="InterPro"/>
</dbReference>
<dbReference type="GO" id="GO:0046872">
    <property type="term" value="F:metal ion binding"/>
    <property type="evidence" value="ECO:0007669"/>
    <property type="project" value="UniProtKB-KW"/>
</dbReference>
<dbReference type="GO" id="GO:0070301">
    <property type="term" value="P:cellular response to hydrogen peroxide"/>
    <property type="evidence" value="ECO:0007669"/>
    <property type="project" value="TreeGrafter"/>
</dbReference>
<dbReference type="GO" id="GO:0042744">
    <property type="term" value="P:hydrogen peroxide catabolic process"/>
    <property type="evidence" value="ECO:0007669"/>
    <property type="project" value="UniProtKB-KW"/>
</dbReference>
<dbReference type="CDD" id="cd00649">
    <property type="entry name" value="catalase_peroxidase_1"/>
    <property type="match status" value="1"/>
</dbReference>
<dbReference type="FunFam" id="1.10.420.10:FF:000004">
    <property type="entry name" value="Catalase-peroxidase"/>
    <property type="match status" value="1"/>
</dbReference>
<dbReference type="FunFam" id="1.10.520.10:FF:000002">
    <property type="entry name" value="Catalase-peroxidase"/>
    <property type="match status" value="1"/>
</dbReference>
<dbReference type="Gene3D" id="1.10.520.10">
    <property type="match status" value="2"/>
</dbReference>
<dbReference type="Gene3D" id="1.10.420.10">
    <property type="entry name" value="Peroxidase, domain 2"/>
    <property type="match status" value="2"/>
</dbReference>
<dbReference type="HAMAP" id="MF_01961">
    <property type="entry name" value="Catal_peroxid"/>
    <property type="match status" value="1"/>
</dbReference>
<dbReference type="InterPro" id="IPR000763">
    <property type="entry name" value="Catalase_peroxidase"/>
</dbReference>
<dbReference type="InterPro" id="IPR002016">
    <property type="entry name" value="Haem_peroxidase"/>
</dbReference>
<dbReference type="InterPro" id="IPR010255">
    <property type="entry name" value="Haem_peroxidase_sf"/>
</dbReference>
<dbReference type="InterPro" id="IPR019794">
    <property type="entry name" value="Peroxidases_AS"/>
</dbReference>
<dbReference type="NCBIfam" id="TIGR00198">
    <property type="entry name" value="cat_per_HPI"/>
    <property type="match status" value="1"/>
</dbReference>
<dbReference type="NCBIfam" id="NF011635">
    <property type="entry name" value="PRK15061.1"/>
    <property type="match status" value="1"/>
</dbReference>
<dbReference type="PANTHER" id="PTHR30555:SF6">
    <property type="entry name" value="CATALASE-PEROXIDASE"/>
    <property type="match status" value="1"/>
</dbReference>
<dbReference type="PANTHER" id="PTHR30555">
    <property type="entry name" value="HYDROPEROXIDASE I, BIFUNCTIONAL CATALASE-PEROXIDASE"/>
    <property type="match status" value="1"/>
</dbReference>
<dbReference type="Pfam" id="PF00141">
    <property type="entry name" value="peroxidase"/>
    <property type="match status" value="2"/>
</dbReference>
<dbReference type="PRINTS" id="PR00460">
    <property type="entry name" value="BPEROXIDASE"/>
</dbReference>
<dbReference type="PRINTS" id="PR00458">
    <property type="entry name" value="PEROXIDASE"/>
</dbReference>
<dbReference type="SUPFAM" id="SSF48113">
    <property type="entry name" value="Heme-dependent peroxidases"/>
    <property type="match status" value="2"/>
</dbReference>
<dbReference type="PROSITE" id="PS00436">
    <property type="entry name" value="PEROXIDASE_2"/>
    <property type="match status" value="1"/>
</dbReference>
<dbReference type="PROSITE" id="PS50873">
    <property type="entry name" value="PEROXIDASE_4"/>
    <property type="match status" value="1"/>
</dbReference>
<keyword id="KW-0349">Heme</keyword>
<keyword id="KW-0376">Hydrogen peroxide</keyword>
<keyword id="KW-0408">Iron</keyword>
<keyword id="KW-0479">Metal-binding</keyword>
<keyword id="KW-0560">Oxidoreductase</keyword>
<keyword id="KW-0575">Peroxidase</keyword>
<gene>
    <name evidence="1" type="primary">katG</name>
    <name type="ordered locus">Shal_1888</name>
</gene>
<accession>B0TRN5</accession>
<evidence type="ECO:0000255" key="1">
    <source>
        <dbReference type="HAMAP-Rule" id="MF_01961"/>
    </source>
</evidence>
<reference key="1">
    <citation type="submission" date="2008-01" db="EMBL/GenBank/DDBJ databases">
        <title>Complete sequence of Shewanella halifaxensis HAW-EB4.</title>
        <authorList>
            <consortium name="US DOE Joint Genome Institute"/>
            <person name="Copeland A."/>
            <person name="Lucas S."/>
            <person name="Lapidus A."/>
            <person name="Glavina del Rio T."/>
            <person name="Dalin E."/>
            <person name="Tice H."/>
            <person name="Bruce D."/>
            <person name="Goodwin L."/>
            <person name="Pitluck S."/>
            <person name="Sims D."/>
            <person name="Brettin T."/>
            <person name="Detter J.C."/>
            <person name="Han C."/>
            <person name="Kuske C.R."/>
            <person name="Schmutz J."/>
            <person name="Larimer F."/>
            <person name="Land M."/>
            <person name="Hauser L."/>
            <person name="Kyrpides N."/>
            <person name="Kim E."/>
            <person name="Zhao J.-S."/>
            <person name="Richardson P."/>
        </authorList>
    </citation>
    <scope>NUCLEOTIDE SEQUENCE [LARGE SCALE GENOMIC DNA]</scope>
    <source>
        <strain>HAW-EB4</strain>
    </source>
</reference>
<sequence>MANKKCPVMHGGATEISMSNMEWWPKALNLDILHQHDSKTNPMGAGFNYREQVKLLDVEALKKDLHALMTDSQPWWPADWGHYGGLMIRLSWHAAGTYRTADGRGGAGRGNQRFAPLNSWPDNVNLDKARRLLWPLKKKYGNKLSWADLIAYAGTIAYESMGLKTFGFAFGREDIWHPEKDIYWGAEKEWLAPSGSEGSRYSGERDLENPLASVMMGLIYVNPEGVDGHPDPLKTANDVRVTFERMAMNDEETVALTAGGHTVGKCHGNGDAELLGPVPEGADVEDQGLGWINKSQRGIGRDTVSSGLEGAWTTHPTQWDNGYFTLLLNHEWQLNKSPAGAWQWEPINIKEEDKPVDVEDLTQRYNPIMTDADMAMKLDPDYQIISARFDKDPEYFSDVFARTWFKLTHRDMGPKTRYIGPDVPAVDLLWQDPVPKGRSDYDVEAVKAQIAASSLSVSDMVTTAWDSARTFRGSDLRGGANGARIRLAPQRDWQANEPERLNRVLAVLEPIAAKSGVSVADVIVLAGNLAVEQAAKAAGFAIKVPFSPGRGDATADMTDVESFHVLEPLHDGYRNWLKKDYAVSAEELMLDQTQLLGLTAQEMTVLLGGMRVLGTNYNGESHGAFTEHQGALTNDFFVNLTDMNNTWQPVSNNLYEISDRETAKLKWTATRVDLVFGSNSILRAYAEVYAQDDNQQKFVEDFVTTWAKVMNSDRFDLD</sequence>
<protein>
    <recommendedName>
        <fullName evidence="1">Catalase-peroxidase</fullName>
        <shortName evidence="1">CP</shortName>
        <ecNumber evidence="1">1.11.1.21</ecNumber>
    </recommendedName>
    <alternativeName>
        <fullName evidence="1">Peroxidase/catalase</fullName>
    </alternativeName>
</protein>